<comment type="function">
    <text evidence="4">Transcription coregulator involved in regulation of gene cluster that mediates the biosynthesis of aspergillic acid, a hydroxamic acid-containing pyrazinone with aliphatic side chains that originates from leucine (Leu) and isoleucine (Ile) (PubMed:29674152). Aspergillic acid has antibiotic properties and was shown to be lethal to mice (PubMed:29674152).</text>
</comment>
<comment type="pathway">
    <text evidence="4">Secondary metabolite biosynthesis.</text>
</comment>
<comment type="induction">
    <text evidence="3">Expressed during the earliest stages of maize kernel infection (PubMed:23834374).</text>
</comment>
<comment type="disruption phenotype">
    <text evidence="4">Leads to the down-regulation of expression of asaB, asaC, asaD, and asaR; and completely abolishes ferriaspergillin production (PubMed:29674152).</text>
</comment>
<accession>B8N0E6</accession>
<proteinExistence type="evidence at transcript level"/>
<sequence>MGAPHEEIQALKRRREQNRLAQRRRRDNVRRRLRDLGLDTGSPASASQTSLCSSTDSRVTLNPHQSLRSTDFLSFETSNSDTEMSPYDPPLQSKLRLDSQIPLAEISFPSYASSVSPSSSAGPLSSSPSPSQRPFIDSTDLTSLQSVYNPTSLAVHLDESSMPCGEAEIPTRQDSNFPRTPNLKSLMSGCNDPSAYQPWILTSSTVGEQMSSQALPHSPGPQHCSTPLPAETRPRWTTALHMAVSQGNFSVMRLLLSYGADPNAVNSEGATALHVGVMNGNYTMVAELLQRGADPTLTNAAGWLPLHQAVHAGDEGCVRVLLEADQPVDYPISDLDYT</sequence>
<name>ASAA_ASPFN</name>
<organism>
    <name type="scientific">Aspergillus flavus (strain ATCC 200026 / FGSC A1120 / IAM 13836 / NRRL 3357 / JCM 12722 / SRRC 167)</name>
    <dbReference type="NCBI Taxonomy" id="332952"/>
    <lineage>
        <taxon>Eukaryota</taxon>
        <taxon>Fungi</taxon>
        <taxon>Dikarya</taxon>
        <taxon>Ascomycota</taxon>
        <taxon>Pezizomycotina</taxon>
        <taxon>Eurotiomycetes</taxon>
        <taxon>Eurotiomycetidae</taxon>
        <taxon>Eurotiales</taxon>
        <taxon>Aspergillaceae</taxon>
        <taxon>Aspergillus</taxon>
        <taxon>Aspergillus subgen. Circumdati</taxon>
    </lineage>
</organism>
<evidence type="ECO:0000255" key="1"/>
<evidence type="ECO:0000256" key="2">
    <source>
        <dbReference type="SAM" id="MobiDB-lite"/>
    </source>
</evidence>
<evidence type="ECO:0000269" key="3">
    <source>
    </source>
</evidence>
<evidence type="ECO:0000269" key="4">
    <source>
    </source>
</evidence>
<evidence type="ECO:0000303" key="5">
    <source>
    </source>
</evidence>
<feature type="chain" id="PRO_0000444454" description="Ankyrin-repeat domain containing transcription coregulator asaA">
    <location>
        <begin position="1"/>
        <end position="338"/>
    </location>
</feature>
<feature type="repeat" description="ANK 1" evidence="1">
    <location>
        <begin position="235"/>
        <end position="264"/>
    </location>
</feature>
<feature type="repeat" description="ANK 2" evidence="1">
    <location>
        <begin position="268"/>
        <end position="297"/>
    </location>
</feature>
<feature type="repeat" description="ANK 3" evidence="1">
    <location>
        <begin position="301"/>
        <end position="330"/>
    </location>
</feature>
<feature type="region of interest" description="Disordered" evidence="2">
    <location>
        <begin position="1"/>
        <end position="70"/>
    </location>
</feature>
<feature type="region of interest" description="Disordered" evidence="2">
    <location>
        <begin position="112"/>
        <end position="137"/>
    </location>
</feature>
<feature type="compositionally biased region" description="Basic and acidic residues" evidence="2">
    <location>
        <begin position="1"/>
        <end position="10"/>
    </location>
</feature>
<feature type="compositionally biased region" description="Basic residues" evidence="2">
    <location>
        <begin position="11"/>
        <end position="33"/>
    </location>
</feature>
<feature type="compositionally biased region" description="Polar residues" evidence="2">
    <location>
        <begin position="42"/>
        <end position="70"/>
    </location>
</feature>
<feature type="compositionally biased region" description="Low complexity" evidence="2">
    <location>
        <begin position="112"/>
        <end position="130"/>
    </location>
</feature>
<reference key="1">
    <citation type="journal article" date="2015" name="Genome Announc.">
        <title>Genome sequence of Aspergillus flavus NRRL 3357, a strain that causes aflatoxin contamination of food and feed.</title>
        <authorList>
            <person name="Nierman W.C."/>
            <person name="Yu J."/>
            <person name="Fedorova-Abrams N.D."/>
            <person name="Losada L."/>
            <person name="Cleveland T.E."/>
            <person name="Bhatnagar D."/>
            <person name="Bennett J.W."/>
            <person name="Dean R."/>
            <person name="Payne G.A."/>
        </authorList>
    </citation>
    <scope>NUCLEOTIDE SEQUENCE [LARGE SCALE GENOMIC DNA]</scope>
    <source>
        <strain>ATCC 200026 / FGSC A1120 / IAM 13836 / NRRL 3357 / JCM 12722 / SRRC 167</strain>
    </source>
</reference>
<reference key="2">
    <citation type="journal article" date="2013" name="Mol. Plant Pathol.">
        <title>Localization, morphology and transcriptional profile of Aspergillus flavus during seed colonization.</title>
        <authorList>
            <person name="Dolezal A.L."/>
            <person name="Obrian G.R."/>
            <person name="Nielsen D.M."/>
            <person name="Woloshuk C.P."/>
            <person name="Boston R.S."/>
            <person name="Payne G.A."/>
        </authorList>
    </citation>
    <scope>IDENTIFICATION WITHIN THE CLUSTER</scope>
    <scope>INDUCTION</scope>
</reference>
<reference key="3">
    <citation type="journal article" date="2018" name="Fungal Genet. Biol.">
        <title>Identification and functional analysis of the aspergillic acid gene cluster in Aspergillus flavus.</title>
        <authorList>
            <person name="Lebar M.D."/>
            <person name="Cary J.W."/>
            <person name="Majumdar R."/>
            <person name="Carter-Wientjes C.H."/>
            <person name="Mack B.M."/>
            <person name="Wei Q."/>
            <person name="Uka V."/>
            <person name="De Saeger S."/>
            <person name="Diana Di Mavungu J."/>
        </authorList>
    </citation>
    <scope>FUNCTION</scope>
    <scope>DISRUPTION PHENOTYPE</scope>
    <scope>PATHWAY</scope>
</reference>
<keyword id="KW-0040">ANK repeat</keyword>
<keyword id="KW-0677">Repeat</keyword>
<keyword id="KW-0804">Transcription</keyword>
<keyword id="KW-0805">Transcription regulation</keyword>
<gene>
    <name evidence="5" type="primary">asaA</name>
    <name type="ORF">AFLA_023000</name>
</gene>
<protein>
    <recommendedName>
        <fullName evidence="5">Ankyrin-repeat domain containing transcription coregulator asaA</fullName>
    </recommendedName>
    <alternativeName>
        <fullName evidence="5">Aspergillic acid biosynthesis cluster protein A</fullName>
    </alternativeName>
</protein>
<dbReference type="EMBL" id="EQ963473">
    <property type="protein sequence ID" value="EED55029.1"/>
    <property type="molecule type" value="Genomic_DNA"/>
</dbReference>
<dbReference type="RefSeq" id="XP_002373811.1">
    <property type="nucleotide sequence ID" value="XM_002373770.1"/>
</dbReference>
<dbReference type="SMR" id="B8N0E6"/>
<dbReference type="STRING" id="332952.B8N0E6"/>
<dbReference type="EnsemblFungi" id="EED55029">
    <property type="protein sequence ID" value="EED55029"/>
    <property type="gene ID" value="AFLA_023000"/>
</dbReference>
<dbReference type="VEuPathDB" id="FungiDB:AFLA_000136"/>
<dbReference type="eggNOG" id="KOG4177">
    <property type="taxonomic scope" value="Eukaryota"/>
</dbReference>
<dbReference type="HOGENOM" id="CLU_070837_0_0_1"/>
<dbReference type="OMA" id="NDTEMMQ"/>
<dbReference type="Gene3D" id="1.25.40.20">
    <property type="entry name" value="Ankyrin repeat-containing domain"/>
    <property type="match status" value="1"/>
</dbReference>
<dbReference type="InterPro" id="IPR002110">
    <property type="entry name" value="Ankyrin_rpt"/>
</dbReference>
<dbReference type="InterPro" id="IPR036770">
    <property type="entry name" value="Ankyrin_rpt-contain_sf"/>
</dbReference>
<dbReference type="PANTHER" id="PTHR24198">
    <property type="entry name" value="ANKYRIN REPEAT AND PROTEIN KINASE DOMAIN-CONTAINING PROTEIN"/>
    <property type="match status" value="1"/>
</dbReference>
<dbReference type="PANTHER" id="PTHR24198:SF165">
    <property type="entry name" value="ANKYRIN REPEAT-CONTAINING PROTEIN-RELATED"/>
    <property type="match status" value="1"/>
</dbReference>
<dbReference type="Pfam" id="PF12796">
    <property type="entry name" value="Ank_2"/>
    <property type="match status" value="1"/>
</dbReference>
<dbReference type="SMART" id="SM00248">
    <property type="entry name" value="ANK"/>
    <property type="match status" value="3"/>
</dbReference>
<dbReference type="SUPFAM" id="SSF48403">
    <property type="entry name" value="Ankyrin repeat"/>
    <property type="match status" value="1"/>
</dbReference>
<dbReference type="PROSITE" id="PS50297">
    <property type="entry name" value="ANK_REP_REGION"/>
    <property type="match status" value="1"/>
</dbReference>
<dbReference type="PROSITE" id="PS50088">
    <property type="entry name" value="ANK_REPEAT"/>
    <property type="match status" value="2"/>
</dbReference>